<accession>Q8TF66</accession>
<accession>Q495Q6</accession>
<accession>Q7RTN7</accession>
<dbReference type="EMBL" id="AB071037">
    <property type="protein sequence ID" value="BAB84587.1"/>
    <property type="molecule type" value="mRNA"/>
</dbReference>
<dbReference type="EMBL" id="AC125362">
    <property type="status" value="NOT_ANNOTATED_CDS"/>
    <property type="molecule type" value="Genomic_DNA"/>
</dbReference>
<dbReference type="EMBL" id="AC174158">
    <property type="status" value="NOT_ANNOTATED_CDS"/>
    <property type="molecule type" value="Genomic_DNA"/>
</dbReference>
<dbReference type="EMBL" id="CH471052">
    <property type="protein sequence ID" value="EAW78054.1"/>
    <property type="molecule type" value="Genomic_DNA"/>
</dbReference>
<dbReference type="EMBL" id="BC101064">
    <property type="protein sequence ID" value="AAI01065.1"/>
    <property type="status" value="ALT_INIT"/>
    <property type="molecule type" value="mRNA"/>
</dbReference>
<dbReference type="EMBL" id="BC101065">
    <property type="protein sequence ID" value="AAI01066.1"/>
    <property type="molecule type" value="mRNA"/>
</dbReference>
<dbReference type="EMBL" id="BK001325">
    <property type="protein sequence ID" value="DAA01740.1"/>
    <property type="status" value="ALT_INIT"/>
    <property type="molecule type" value="mRNA"/>
</dbReference>
<dbReference type="CCDS" id="CCDS3306.1">
    <molecule id="Q8TF66-1"/>
</dbReference>
<dbReference type="CCDS" id="CCDS46984.1">
    <molecule id="Q8TF66-2"/>
</dbReference>
<dbReference type="RefSeq" id="NP_001128529.2">
    <molecule id="Q8TF66-2"/>
    <property type="nucleotide sequence ID" value="NM_001135057.3"/>
</dbReference>
<dbReference type="RefSeq" id="NP_570843.2">
    <molecule id="Q8TF66-1"/>
    <property type="nucleotide sequence ID" value="NM_130830.5"/>
</dbReference>
<dbReference type="SMR" id="Q8TF66"/>
<dbReference type="BioGRID" id="126287">
    <property type="interactions" value="198"/>
</dbReference>
<dbReference type="FunCoup" id="Q8TF66">
    <property type="interactions" value="400"/>
</dbReference>
<dbReference type="IntAct" id="Q8TF66">
    <property type="interactions" value="121"/>
</dbReference>
<dbReference type="MINT" id="Q8TF66"/>
<dbReference type="STRING" id="9606.ENSP00000413707"/>
<dbReference type="ChEMBL" id="CHEMBL4295907"/>
<dbReference type="TCDB" id="8.A.43.1.13">
    <property type="family name" value="the neat-domain containing methaemoglobin heme sequestration (n-mhs) family"/>
</dbReference>
<dbReference type="GlyConnect" id="1451">
    <property type="glycosylation" value="3 N-Linked glycans (1 site)"/>
</dbReference>
<dbReference type="GlyCosmos" id="Q8TF66">
    <property type="glycosylation" value="2 sites, 3 glycans"/>
</dbReference>
<dbReference type="GlyGen" id="Q8TF66">
    <property type="glycosylation" value="2 sites, 3 N-linked glycans (1 site)"/>
</dbReference>
<dbReference type="iPTMnet" id="Q8TF66"/>
<dbReference type="PhosphoSitePlus" id="Q8TF66"/>
<dbReference type="SwissPalm" id="Q8TF66"/>
<dbReference type="BioMuta" id="LRRC15"/>
<dbReference type="DMDM" id="334302830"/>
<dbReference type="jPOST" id="Q8TF66"/>
<dbReference type="MassIVE" id="Q8TF66"/>
<dbReference type="PaxDb" id="9606-ENSP00000413707"/>
<dbReference type="PeptideAtlas" id="Q8TF66"/>
<dbReference type="ProteomicsDB" id="74566">
    <molecule id="Q8TF66-1"/>
</dbReference>
<dbReference type="ProteomicsDB" id="74567">
    <molecule id="Q8TF66-2"/>
</dbReference>
<dbReference type="Pumba" id="Q8TF66"/>
<dbReference type="ABCD" id="Q8TF66">
    <property type="antibodies" value="1 sequenced antibody"/>
</dbReference>
<dbReference type="Antibodypedia" id="33889">
    <property type="antibodies" value="146 antibodies from 19 providers"/>
</dbReference>
<dbReference type="DNASU" id="131578"/>
<dbReference type="Ensembl" id="ENST00000347624.4">
    <molecule id="Q8TF66-1"/>
    <property type="protein sequence ID" value="ENSP00000306276.4"/>
    <property type="gene ID" value="ENSG00000172061.9"/>
</dbReference>
<dbReference type="Ensembl" id="ENST00000428839.1">
    <molecule id="Q8TF66-2"/>
    <property type="protein sequence ID" value="ENSP00000413707.1"/>
    <property type="gene ID" value="ENSG00000172061.9"/>
</dbReference>
<dbReference type="GeneID" id="131578"/>
<dbReference type="KEGG" id="hsa:131578"/>
<dbReference type="MANE-Select" id="ENST00000347624.4">
    <property type="protein sequence ID" value="ENSP00000306276.4"/>
    <property type="RefSeq nucleotide sequence ID" value="NM_130830.5"/>
    <property type="RefSeq protein sequence ID" value="NP_570843.2"/>
</dbReference>
<dbReference type="UCSC" id="uc003ftt.4">
    <molecule id="Q8TF66-1"/>
    <property type="organism name" value="human"/>
</dbReference>
<dbReference type="AGR" id="HGNC:20818"/>
<dbReference type="CTD" id="131578"/>
<dbReference type="DisGeNET" id="131578"/>
<dbReference type="GeneCards" id="LRRC15"/>
<dbReference type="HGNC" id="HGNC:20818">
    <property type="gene designation" value="LRRC15"/>
</dbReference>
<dbReference type="HPA" id="ENSG00000172061">
    <property type="expression patterns" value="Tissue enhanced (lymphoid tissue, skin)"/>
</dbReference>
<dbReference type="MIM" id="619327">
    <property type="type" value="gene"/>
</dbReference>
<dbReference type="neXtProt" id="NX_Q8TF66"/>
<dbReference type="OpenTargets" id="ENSG00000172061"/>
<dbReference type="PharmGKB" id="PA134956867"/>
<dbReference type="VEuPathDB" id="HostDB:ENSG00000172061"/>
<dbReference type="eggNOG" id="KOG0619">
    <property type="taxonomic scope" value="Eukaryota"/>
</dbReference>
<dbReference type="GeneTree" id="ENSGT00940000161771"/>
<dbReference type="HOGENOM" id="CLU_000288_18_6_1"/>
<dbReference type="InParanoid" id="Q8TF66"/>
<dbReference type="OrthoDB" id="2015831at2759"/>
<dbReference type="PAN-GO" id="Q8TF66">
    <property type="GO annotations" value="2 GO annotations based on evolutionary models"/>
</dbReference>
<dbReference type="TreeFam" id="TF351124"/>
<dbReference type="PathwayCommons" id="Q8TF66"/>
<dbReference type="SignaLink" id="Q8TF66"/>
<dbReference type="BioGRID-ORCS" id="131578">
    <property type="hits" value="35 hits in 1142 CRISPR screens"/>
</dbReference>
<dbReference type="ChiTaRS" id="LRRC15">
    <property type="organism name" value="human"/>
</dbReference>
<dbReference type="GenomeRNAi" id="131578"/>
<dbReference type="Pharos" id="Q8TF66">
    <property type="development level" value="Tbio"/>
</dbReference>
<dbReference type="PRO" id="PR:Q8TF66"/>
<dbReference type="Proteomes" id="UP000005640">
    <property type="component" value="Chromosome 3"/>
</dbReference>
<dbReference type="RNAct" id="Q8TF66">
    <property type="molecule type" value="protein"/>
</dbReference>
<dbReference type="Bgee" id="ENSG00000172061">
    <property type="expression patterns" value="Expressed in periodontal ligament and 98 other cell types or tissues"/>
</dbReference>
<dbReference type="GO" id="GO:0016324">
    <property type="term" value="C:apical plasma membrane"/>
    <property type="evidence" value="ECO:0000314"/>
    <property type="project" value="UniProt"/>
</dbReference>
<dbReference type="GO" id="GO:0070062">
    <property type="term" value="C:extracellular exosome"/>
    <property type="evidence" value="ECO:0007005"/>
    <property type="project" value="UniProtKB"/>
</dbReference>
<dbReference type="GO" id="GO:0031012">
    <property type="term" value="C:extracellular matrix"/>
    <property type="evidence" value="ECO:0000318"/>
    <property type="project" value="GO_Central"/>
</dbReference>
<dbReference type="GO" id="GO:0005615">
    <property type="term" value="C:extracellular space"/>
    <property type="evidence" value="ECO:0000318"/>
    <property type="project" value="GO_Central"/>
</dbReference>
<dbReference type="GO" id="GO:0005886">
    <property type="term" value="C:plasma membrane"/>
    <property type="evidence" value="ECO:0000314"/>
    <property type="project" value="UniProtKB"/>
</dbReference>
<dbReference type="GO" id="GO:0005518">
    <property type="term" value="F:collagen binding"/>
    <property type="evidence" value="ECO:0000314"/>
    <property type="project" value="UniProtKB"/>
</dbReference>
<dbReference type="GO" id="GO:0001968">
    <property type="term" value="F:fibronectin binding"/>
    <property type="evidence" value="ECO:0000314"/>
    <property type="project" value="UniProtKB"/>
</dbReference>
<dbReference type="GO" id="GO:0043236">
    <property type="term" value="F:laminin binding"/>
    <property type="evidence" value="ECO:0000314"/>
    <property type="project" value="UniProtKB"/>
</dbReference>
<dbReference type="GO" id="GO:0140311">
    <property type="term" value="F:protein sequestering activity"/>
    <property type="evidence" value="ECO:0000314"/>
    <property type="project" value="UniProt"/>
</dbReference>
<dbReference type="GO" id="GO:0046597">
    <property type="term" value="P:host-mediated suppression of symbiont invasion"/>
    <property type="evidence" value="ECO:0000314"/>
    <property type="project" value="UniProtKB"/>
</dbReference>
<dbReference type="GO" id="GO:1903077">
    <property type="term" value="P:negative regulation of protein localization to plasma membrane"/>
    <property type="evidence" value="ECO:0000315"/>
    <property type="project" value="UniProtKB"/>
</dbReference>
<dbReference type="GO" id="GO:0030335">
    <property type="term" value="P:positive regulation of cell migration"/>
    <property type="evidence" value="ECO:0000315"/>
    <property type="project" value="UniProtKB"/>
</dbReference>
<dbReference type="GO" id="GO:0046813">
    <property type="term" value="P:receptor-mediated virion attachment to host cell"/>
    <property type="evidence" value="ECO:0000314"/>
    <property type="project" value="UniProtKB"/>
</dbReference>
<dbReference type="FunFam" id="3.80.10.10:FF:000334">
    <property type="entry name" value="Leucine rich repeat containing 15"/>
    <property type="match status" value="1"/>
</dbReference>
<dbReference type="FunFam" id="3.80.10.10:FF:000520">
    <property type="entry name" value="Leucine rich repeat containing 15"/>
    <property type="match status" value="1"/>
</dbReference>
<dbReference type="FunFam" id="3.80.10.10:FF:000636">
    <property type="entry name" value="Leucine rich repeat containing 15"/>
    <property type="match status" value="1"/>
</dbReference>
<dbReference type="Gene3D" id="3.80.10.10">
    <property type="entry name" value="Ribonuclease Inhibitor"/>
    <property type="match status" value="4"/>
</dbReference>
<dbReference type="InterPro" id="IPR000483">
    <property type="entry name" value="Cys-rich_flank_reg_C"/>
</dbReference>
<dbReference type="InterPro" id="IPR050328">
    <property type="entry name" value="Dev_Immune_Receptor"/>
</dbReference>
<dbReference type="InterPro" id="IPR001611">
    <property type="entry name" value="Leu-rich_rpt"/>
</dbReference>
<dbReference type="InterPro" id="IPR003591">
    <property type="entry name" value="Leu-rich_rpt_typical-subtyp"/>
</dbReference>
<dbReference type="InterPro" id="IPR032675">
    <property type="entry name" value="LRR_dom_sf"/>
</dbReference>
<dbReference type="PANTHER" id="PTHR24373:SF262">
    <property type="entry name" value="LEUCINE-RICH REPEAT-CONTAINING PROTEIN 15"/>
    <property type="match status" value="1"/>
</dbReference>
<dbReference type="PANTHER" id="PTHR24373">
    <property type="entry name" value="SLIT RELATED LEUCINE-RICH REPEAT NEURONAL PROTEIN"/>
    <property type="match status" value="1"/>
</dbReference>
<dbReference type="Pfam" id="PF00560">
    <property type="entry name" value="LRR_1"/>
    <property type="match status" value="1"/>
</dbReference>
<dbReference type="Pfam" id="PF13855">
    <property type="entry name" value="LRR_8"/>
    <property type="match status" value="5"/>
</dbReference>
<dbReference type="SMART" id="SM00364">
    <property type="entry name" value="LRR_BAC"/>
    <property type="match status" value="7"/>
</dbReference>
<dbReference type="SMART" id="SM00365">
    <property type="entry name" value="LRR_SD22"/>
    <property type="match status" value="6"/>
</dbReference>
<dbReference type="SMART" id="SM00369">
    <property type="entry name" value="LRR_TYP"/>
    <property type="match status" value="14"/>
</dbReference>
<dbReference type="SMART" id="SM00082">
    <property type="entry name" value="LRRCT"/>
    <property type="match status" value="1"/>
</dbReference>
<dbReference type="SUPFAM" id="SSF52058">
    <property type="entry name" value="L domain-like"/>
    <property type="match status" value="2"/>
</dbReference>
<dbReference type="PROSITE" id="PS51450">
    <property type="entry name" value="LRR"/>
    <property type="match status" value="14"/>
</dbReference>
<keyword id="KW-0025">Alternative splicing</keyword>
<keyword id="KW-1003">Cell membrane</keyword>
<keyword id="KW-0325">Glycoprotein</keyword>
<keyword id="KW-0433">Leucine-rich repeat</keyword>
<keyword id="KW-0472">Membrane</keyword>
<keyword id="KW-1267">Proteomics identification</keyword>
<keyword id="KW-1185">Reference proteome</keyword>
<keyword id="KW-0677">Repeat</keyword>
<keyword id="KW-0732">Signal</keyword>
<keyword id="KW-0812">Transmembrane</keyword>
<keyword id="KW-1133">Transmembrane helix</keyword>
<sequence>MPLKHYLLLLVGCQAWGAGLAYHGCPSECTCSRASQVECTGARIVAVPTPLPWNAMSLQILNTHITELNESPFLNISALIALRIEKNELSRITPGAFRNLGSLRYLSLANNKLQVLPIGLFQGLDSLESLLLSSNQLLQIQPAHFSQCSNLKELQLHGNHLEYIPDGAFDHLVGLTKLNLGKNSLTHISPRVFQHLGNLQVLRLYENRLTDIPMGTFDGLVNLQELALQQNQIGLLSPGLFHNNHNLQRLYLSNNHISQLPPSVFMQLPQLNRLTLFGNSLKELSPGIFGPMPNLRELWLYDNHISSLPDNVFSNLRQLQVLILSRNQISFISPGAFNGLTELRELSLHTNALQDLDGNVFRMLANLQNISLQNNRLRQLPGNIFANVNGLMAIQLQNNQLENLPLGIFDHLGKLCELRLYDNPWRCDSDILPLRNWLLLNQPRLGTDTVPVCFSPANVRGQSLIIINVNVAVPSVHVPEVPSYPETPWYPDTPSYPDTTSVSSTTELTSPVEDYTDLTTIQVTDDRSVWGMTQAQSGLAIAAIVIGIVALACSLAACVGCCCCKKRSQAVLMQMKAPNEC</sequence>
<gene>
    <name type="primary">LRRC15</name>
    <name type="synonym">LIB</name>
</gene>
<protein>
    <recommendedName>
        <fullName>Leucine-rich repeat-containing protein 15</fullName>
    </recommendedName>
    <alternativeName>
        <fullName>Leucine-rich repeat protein induced by beta-amyloid homolog</fullName>
        <shortName>hLib</shortName>
    </alternativeName>
</protein>
<reference key="1">
    <citation type="journal article" date="2002" name="Biochem. Biophys. Res. Commun.">
        <title>A novel member of the leucine-rich repeat superfamily induced in rat astrocytes by beta-amyloid.</title>
        <authorList>
            <person name="Satoh K."/>
            <person name="Hata M."/>
            <person name="Yokota H."/>
        </authorList>
    </citation>
    <scope>NUCLEOTIDE SEQUENCE [MRNA] (ISOFORM 1)</scope>
    <scope>VARIANTS ILE-264 AND LEU-286</scope>
    <scope>TISSUE SPECIFICITY</scope>
    <source>
        <tissue>Brain</tissue>
    </source>
</reference>
<reference key="2">
    <citation type="journal article" date="2006" name="Nature">
        <title>The DNA sequence, annotation and analysis of human chromosome 3.</title>
        <authorList>
            <person name="Muzny D.M."/>
            <person name="Scherer S.E."/>
            <person name="Kaul R."/>
            <person name="Wang J."/>
            <person name="Yu J."/>
            <person name="Sudbrak R."/>
            <person name="Buhay C.J."/>
            <person name="Chen R."/>
            <person name="Cree A."/>
            <person name="Ding Y."/>
            <person name="Dugan-Rocha S."/>
            <person name="Gill R."/>
            <person name="Gunaratne P."/>
            <person name="Harris R.A."/>
            <person name="Hawes A.C."/>
            <person name="Hernandez J."/>
            <person name="Hodgson A.V."/>
            <person name="Hume J."/>
            <person name="Jackson A."/>
            <person name="Khan Z.M."/>
            <person name="Kovar-Smith C."/>
            <person name="Lewis L.R."/>
            <person name="Lozado R.J."/>
            <person name="Metzker M.L."/>
            <person name="Milosavljevic A."/>
            <person name="Miner G.R."/>
            <person name="Morgan M.B."/>
            <person name="Nazareth L.V."/>
            <person name="Scott G."/>
            <person name="Sodergren E."/>
            <person name="Song X.-Z."/>
            <person name="Steffen D."/>
            <person name="Wei S."/>
            <person name="Wheeler D.A."/>
            <person name="Wright M.W."/>
            <person name="Worley K.C."/>
            <person name="Yuan Y."/>
            <person name="Zhang Z."/>
            <person name="Adams C.Q."/>
            <person name="Ansari-Lari M.A."/>
            <person name="Ayele M."/>
            <person name="Brown M.J."/>
            <person name="Chen G."/>
            <person name="Chen Z."/>
            <person name="Clendenning J."/>
            <person name="Clerc-Blankenburg K.P."/>
            <person name="Chen R."/>
            <person name="Chen Z."/>
            <person name="Davis C."/>
            <person name="Delgado O."/>
            <person name="Dinh H.H."/>
            <person name="Dong W."/>
            <person name="Draper H."/>
            <person name="Ernst S."/>
            <person name="Fu G."/>
            <person name="Gonzalez-Garay M.L."/>
            <person name="Garcia D.K."/>
            <person name="Gillett W."/>
            <person name="Gu J."/>
            <person name="Hao B."/>
            <person name="Haugen E."/>
            <person name="Havlak P."/>
            <person name="He X."/>
            <person name="Hennig S."/>
            <person name="Hu S."/>
            <person name="Huang W."/>
            <person name="Jackson L.R."/>
            <person name="Jacob L.S."/>
            <person name="Kelly S.H."/>
            <person name="Kube M."/>
            <person name="Levy R."/>
            <person name="Li Z."/>
            <person name="Liu B."/>
            <person name="Liu J."/>
            <person name="Liu W."/>
            <person name="Lu J."/>
            <person name="Maheshwari M."/>
            <person name="Nguyen B.-V."/>
            <person name="Okwuonu G.O."/>
            <person name="Palmeiri A."/>
            <person name="Pasternak S."/>
            <person name="Perez L.M."/>
            <person name="Phelps K.A."/>
            <person name="Plopper F.J."/>
            <person name="Qiang B."/>
            <person name="Raymond C."/>
            <person name="Rodriguez R."/>
            <person name="Saenphimmachak C."/>
            <person name="Santibanez J."/>
            <person name="Shen H."/>
            <person name="Shen Y."/>
            <person name="Subramanian S."/>
            <person name="Tabor P.E."/>
            <person name="Verduzco D."/>
            <person name="Waldron L."/>
            <person name="Wang J."/>
            <person name="Wang J."/>
            <person name="Wang Q."/>
            <person name="Williams G.A."/>
            <person name="Wong G.K.-S."/>
            <person name="Yao Z."/>
            <person name="Zhang J."/>
            <person name="Zhang X."/>
            <person name="Zhao G."/>
            <person name="Zhou J."/>
            <person name="Zhou Y."/>
            <person name="Nelson D."/>
            <person name="Lehrach H."/>
            <person name="Reinhardt R."/>
            <person name="Naylor S.L."/>
            <person name="Yang H."/>
            <person name="Olson M."/>
            <person name="Weinstock G."/>
            <person name="Gibbs R.A."/>
        </authorList>
    </citation>
    <scope>NUCLEOTIDE SEQUENCE [LARGE SCALE GENOMIC DNA]</scope>
</reference>
<reference key="3">
    <citation type="submission" date="2005-09" db="EMBL/GenBank/DDBJ databases">
        <authorList>
            <person name="Mural R.J."/>
            <person name="Istrail S."/>
            <person name="Sutton G.G."/>
            <person name="Florea L."/>
            <person name="Halpern A.L."/>
            <person name="Mobarry C.M."/>
            <person name="Lippert R."/>
            <person name="Walenz B."/>
            <person name="Shatkay H."/>
            <person name="Dew I."/>
            <person name="Miller J.R."/>
            <person name="Flanigan M.J."/>
            <person name="Edwards N.J."/>
            <person name="Bolanos R."/>
            <person name="Fasulo D."/>
            <person name="Halldorsson B.V."/>
            <person name="Hannenhalli S."/>
            <person name="Turner R."/>
            <person name="Yooseph S."/>
            <person name="Lu F."/>
            <person name="Nusskern D.R."/>
            <person name="Shue B.C."/>
            <person name="Zheng X.H."/>
            <person name="Zhong F."/>
            <person name="Delcher A.L."/>
            <person name="Huson D.H."/>
            <person name="Kravitz S.A."/>
            <person name="Mouchard L."/>
            <person name="Reinert K."/>
            <person name="Remington K.A."/>
            <person name="Clark A.G."/>
            <person name="Waterman M.S."/>
            <person name="Eichler E.E."/>
            <person name="Adams M.D."/>
            <person name="Hunkapiller M.W."/>
            <person name="Myers E.W."/>
            <person name="Venter J.C."/>
        </authorList>
    </citation>
    <scope>NUCLEOTIDE SEQUENCE [LARGE SCALE GENOMIC DNA]</scope>
</reference>
<reference key="4">
    <citation type="journal article" date="2004" name="Genome Res.">
        <title>The status, quality, and expansion of the NIH full-length cDNA project: the Mammalian Gene Collection (MGC).</title>
        <authorList>
            <consortium name="The MGC Project Team"/>
        </authorList>
    </citation>
    <scope>NUCLEOTIDE SEQUENCE [LARGE SCALE MRNA] (ISOFORMS 1 AND 2)</scope>
</reference>
<reference key="5">
    <citation type="journal article" date="2003" name="Genes Dev.">
        <title>Identification of a DNA-binding site and transcriptional target for the EWS-WT1(+KTS) oncoprotein.</title>
        <authorList>
            <person name="Reynolds P.A."/>
            <person name="Smolen G.A."/>
            <person name="Palmer R.E."/>
            <person name="Sgroi D."/>
            <person name="Yajnik V."/>
            <person name="Gerald W.L."/>
            <person name="Haber D.A."/>
        </authorList>
    </citation>
    <scope>IDENTIFICATION</scope>
    <scope>ALTERNATIVE SPLICING (ISOFORM 2)</scope>
    <scope>VARIANTS ILE-264 AND LEU-286</scope>
</reference>
<reference key="6">
    <citation type="journal article" date="2021" name="Sci. Rep.">
        <title>Transcriptomic and epigenomic analyses uncovered Lrrc15 as a contributing factor to cartilage damage in osteoarthritis.</title>
        <authorList>
            <person name="Singh P."/>
            <person name="Wang M."/>
            <person name="Mukherjee P."/>
            <person name="Lessard S.G."/>
            <person name="Pannellini T."/>
            <person name="Carballo C.B."/>
            <person name="Rodeo S.A."/>
            <person name="Goldring M.B."/>
            <person name="Otero M."/>
        </authorList>
    </citation>
    <scope>TISSUE SPECIFICITY</scope>
    <scope>INDUCTION BY IL1B</scope>
</reference>
<reference key="7">
    <citation type="journal article" date="2022" name="PLoS Biol.">
        <title>LRRC15 inhibits SARS-CoV-2 cellular entry in trans.</title>
        <authorList>
            <person name="Song J."/>
            <person name="Chow R.D."/>
            <person name="Pena-Hernandez M.A."/>
            <person name="Zhang L."/>
            <person name="Loeb S.A."/>
            <person name="So E.Y."/>
            <person name="Liang O.D."/>
            <person name="Ren P."/>
            <person name="Chen S."/>
            <person name="Wilen C.B."/>
            <person name="Lee S."/>
        </authorList>
    </citation>
    <scope>FUNCTION (MICROBIAL INFECTION)</scope>
    <scope>INTERACTION WITH SARS-COV-2 SPIKE PROTEIN (MICROBIAL INFECTION)</scope>
    <scope>SUBCELLULAR LOCATION</scope>
    <scope>TISSUE SPECIFICITY</scope>
</reference>
<reference key="8">
    <citation type="journal article" date="2023" name="PLoS Biol.">
        <title>LRRC15 mediates an accessory interaction with the SARS-CoV-2 spike protein.</title>
        <authorList>
            <person name="Shilts J."/>
            <person name="Crozier T.W.M."/>
            <person name="Teixeira-Silva A."/>
            <person name="Gabaev I."/>
            <person name="Gerber P.P."/>
            <person name="Greenwood E.J.D."/>
            <person name="Watson S.J."/>
            <person name="Ortmann B.M."/>
            <person name="Gawden-Bone C.M."/>
            <person name="Pauzaite T."/>
            <person name="Hoffmann M."/>
            <person name="Nathan J.A."/>
            <person name="Poehlmann S."/>
            <person name="Matheson N.J."/>
            <person name="Lehner P.J."/>
            <person name="Wright G.J."/>
        </authorList>
    </citation>
    <scope>FUNCTION (MICROBIAL INFECTION)</scope>
    <scope>INTERACTION WITH SARS-COV-2 SPIKE PROTEIN (MICROBIAL INFECTION)</scope>
    <scope>SUBCELLULAR LOCATION</scope>
    <scope>INDUCTION BY TGFB1</scope>
    <scope>INDUCTION BY SARS-COV-2</scope>
</reference>
<reference key="9">
    <citation type="journal article" date="2023" name="PLoS Biol.">
        <title>Fibroblast-expressed LRRC15 is a receptor for SARS-CoV-2 spike and controls antiviral and antifibrotic transcriptional programs.</title>
        <authorList>
            <person name="Loo L."/>
            <person name="Waller M.A."/>
            <person name="Moreno C.L."/>
            <person name="Cole A.J."/>
            <person name="Stella A.O."/>
            <person name="Pop O.T."/>
            <person name="Jochum A.K."/>
            <person name="Ali O.H."/>
            <person name="Denes C.E."/>
            <person name="Hamoudi Z."/>
            <person name="Chung F."/>
            <person name="Aggarwal A."/>
            <person name="Low J.K.K."/>
            <person name="Patel K."/>
            <person name="Siddiquee R."/>
            <person name="Kang T."/>
            <person name="Mathivanan S."/>
            <person name="Mackay J.P."/>
            <person name="Jochum W."/>
            <person name="Flatz L."/>
            <person name="Hesselson D."/>
            <person name="Turville S."/>
            <person name="Neely G.G."/>
        </authorList>
    </citation>
    <scope>FUNCTION (MICROBIAL INFECTION)</scope>
    <scope>INTERACTION WITH SARS-COV-2 SPIKE PROTEIN (MICROBIAL INFECTION)</scope>
    <scope>SUBCELLULAR LOCATION</scope>
    <scope>TISSUE SPECIFICITY</scope>
    <scope>INDUCTION BY SARS-COV-2</scope>
</reference>
<organism>
    <name type="scientific">Homo sapiens</name>
    <name type="common">Human</name>
    <dbReference type="NCBI Taxonomy" id="9606"/>
    <lineage>
        <taxon>Eukaryota</taxon>
        <taxon>Metazoa</taxon>
        <taxon>Chordata</taxon>
        <taxon>Craniata</taxon>
        <taxon>Vertebrata</taxon>
        <taxon>Euteleostomi</taxon>
        <taxon>Mammalia</taxon>
        <taxon>Eutheria</taxon>
        <taxon>Euarchontoglires</taxon>
        <taxon>Primates</taxon>
        <taxon>Haplorrhini</taxon>
        <taxon>Catarrhini</taxon>
        <taxon>Hominidae</taxon>
        <taxon>Homo</taxon>
    </lineage>
</organism>
<comment type="function">
    <text evidence="6 7 8">(Microbial infection) Modulates the ability of SARS-CoV-2 to infect host cells through interaction with the spike protein (PubMed:36228039, PubMed:36735681, PubMed:36757924). Does not act as a SARS-CoV-2 entry receptor but sequesters virions and antagonizes in trans SARS-CoV-2 infection of ACE2(+) cells when expressed on nearby cells (PubMed:36228039, PubMed:36757924).</text>
</comment>
<comment type="subunit">
    <text evidence="6 7 8">(Microbial infection) Interacts with human coronavirus SARS-CoV-2 spike protein (via RBD domain); the interaction is direct and sequesters virions at the cell surface.</text>
</comment>
<comment type="subunit">
    <molecule>Isoform 1</molecule>
    <text evidence="8">(Microbial infection) Interacts with human coronavirus SARS-CoV-2 spike protein (via RBD domain); the interaction is direct.</text>
</comment>
<comment type="subunit">
    <molecule>Isoform 2</molecule>
    <text evidence="8">(Microbial infection) Interacts with human coronavirus SARS-CoV-2 spike protein (via RBD domain); the interaction is direct.</text>
</comment>
<comment type="subcellular location">
    <subcellularLocation>
        <location evidence="6 7 8">Cell membrane</location>
        <topology evidence="1">Single-pass type I membrane protein</topology>
    </subcellularLocation>
</comment>
<comment type="alternative products">
    <event type="alternative splicing"/>
    <isoform>
        <id>Q8TF66-1</id>
        <name>1</name>
        <sequence type="displayed"/>
    </isoform>
    <isoform>
        <id>Q8TF66-2</id>
        <name>2</name>
        <sequence type="described" ref="VSP_041130"/>
    </isoform>
</comment>
<comment type="tissue specificity">
    <text evidence="3 5 6 8">Expressed in brain and placenta (PubMed:11785964). Expressed in lung fibroblasts (PubMed:36228039, PubMed:36757924). Expressed in chodrocytes (PubMed:34702854).</text>
</comment>
<comment type="induction">
    <text evidence="5 7 8">In fiboblasts, expression is strongly induced by TGFB1 (PubMed:36735681, PubMed:36757924). In chodrocytes, expression is induced by IL1B (PubMed:34702854).</text>
</comment>
<comment type="induction">
    <text evidence="6 8">(Microbial infection) In alveolar cells and fibroblasts, expression is induced by Sars-CoV-2 infection.</text>
</comment>
<comment type="sequence caution" evidence="10">
    <conflict type="erroneous initiation">
        <sequence resource="EMBL-CDS" id="AAI01065"/>
    </conflict>
    <text>Truncated N-terminus.</text>
</comment>
<comment type="sequence caution" evidence="10">
    <conflict type="erroneous initiation">
        <sequence resource="EMBL-CDS" id="DAA01740"/>
    </conflict>
    <text>Truncated N-terminus.</text>
</comment>
<proteinExistence type="evidence at protein level"/>
<feature type="signal peptide" evidence="1">
    <location>
        <begin position="1"/>
        <end position="21"/>
    </location>
</feature>
<feature type="chain" id="PRO_0000021605" description="Leucine-rich repeat-containing protein 15">
    <location>
        <begin position="22"/>
        <end position="581"/>
    </location>
</feature>
<feature type="topological domain" description="Extracellular" evidence="1">
    <location>
        <begin position="22"/>
        <end position="538"/>
    </location>
</feature>
<feature type="transmembrane region" description="Helical" evidence="1">
    <location>
        <begin position="539"/>
        <end position="559"/>
    </location>
</feature>
<feature type="topological domain" description="Cytoplasmic" evidence="1">
    <location>
        <begin position="560"/>
        <end position="581"/>
    </location>
</feature>
<feature type="domain" description="LRRNT">
    <location>
        <begin position="22"/>
        <end position="53"/>
    </location>
</feature>
<feature type="repeat" description="LRR 1">
    <location>
        <begin position="54"/>
        <end position="75"/>
    </location>
</feature>
<feature type="repeat" description="LRR 2">
    <location>
        <begin position="78"/>
        <end position="99"/>
    </location>
</feature>
<feature type="repeat" description="LRR 3">
    <location>
        <begin position="102"/>
        <end position="123"/>
    </location>
</feature>
<feature type="repeat" description="LRR 4">
    <location>
        <begin position="126"/>
        <end position="147"/>
    </location>
</feature>
<feature type="repeat" description="LRR 5">
    <location>
        <begin position="150"/>
        <end position="171"/>
    </location>
</feature>
<feature type="repeat" description="LRR 6">
    <location>
        <begin position="174"/>
        <end position="195"/>
    </location>
</feature>
<feature type="repeat" description="LRR 7">
    <location>
        <begin position="198"/>
        <end position="219"/>
    </location>
</feature>
<feature type="repeat" description="LRR 8">
    <location>
        <begin position="222"/>
        <end position="243"/>
    </location>
</feature>
<feature type="repeat" description="LRR 9">
    <location>
        <begin position="246"/>
        <end position="267"/>
    </location>
</feature>
<feature type="repeat" description="LRR 10">
    <location>
        <begin position="270"/>
        <end position="291"/>
    </location>
</feature>
<feature type="repeat" description="LRR 11">
    <location>
        <begin position="294"/>
        <end position="315"/>
    </location>
</feature>
<feature type="repeat" description="LRR 12">
    <location>
        <begin position="318"/>
        <end position="339"/>
    </location>
</feature>
<feature type="repeat" description="LRR 13">
    <location>
        <begin position="342"/>
        <end position="363"/>
    </location>
</feature>
<feature type="repeat" description="LRR 14">
    <location>
        <begin position="366"/>
        <end position="387"/>
    </location>
</feature>
<feature type="repeat" description="LRR 15">
    <location>
        <begin position="390"/>
        <end position="411"/>
    </location>
</feature>
<feature type="domain" description="LRRCT">
    <location>
        <begin position="423"/>
        <end position="475"/>
    </location>
</feature>
<feature type="region of interest" description="Disordered" evidence="2">
    <location>
        <begin position="489"/>
        <end position="509"/>
    </location>
</feature>
<feature type="compositionally biased region" description="Low complexity" evidence="2">
    <location>
        <begin position="499"/>
        <end position="509"/>
    </location>
</feature>
<feature type="glycosylation site" description="N-linked (GlcNAc...) asparagine" evidence="1">
    <location>
        <position position="75"/>
    </location>
</feature>
<feature type="glycosylation site" description="N-linked (GlcNAc...) asparagine" evidence="1">
    <location>
        <position position="369"/>
    </location>
</feature>
<feature type="splice variant" id="VSP_041130" description="In isoform 2." evidence="9">
    <original>M</original>
    <variation>MPLDKAM</variation>
    <location>
        <position position="1"/>
    </location>
</feature>
<feature type="sequence variant" id="VAR_051101" description="In dbSNP:rs13060627." evidence="3 4">
    <original>V</original>
    <variation>I</variation>
    <location>
        <position position="264"/>
    </location>
</feature>
<feature type="sequence variant" id="VAR_051102" description="In dbSNP:rs13070515." evidence="3 4">
    <original>P</original>
    <variation>L</variation>
    <location>
        <position position="286"/>
    </location>
</feature>
<evidence type="ECO:0000255" key="1"/>
<evidence type="ECO:0000256" key="2">
    <source>
        <dbReference type="SAM" id="MobiDB-lite"/>
    </source>
</evidence>
<evidence type="ECO:0000269" key="3">
    <source>
    </source>
</evidence>
<evidence type="ECO:0000269" key="4">
    <source>
    </source>
</evidence>
<evidence type="ECO:0000269" key="5">
    <source>
    </source>
</evidence>
<evidence type="ECO:0000269" key="6">
    <source>
    </source>
</evidence>
<evidence type="ECO:0000269" key="7">
    <source>
    </source>
</evidence>
<evidence type="ECO:0000269" key="8">
    <source>
    </source>
</evidence>
<evidence type="ECO:0000303" key="9">
    <source>
    </source>
</evidence>
<evidence type="ECO:0000305" key="10"/>
<name>LRC15_HUMAN</name>